<dbReference type="EC" id="6.1.1.12" evidence="1"/>
<dbReference type="EMBL" id="CP000962">
    <property type="protein sequence ID" value="ACA54507.1"/>
    <property type="molecule type" value="Genomic_DNA"/>
</dbReference>
<dbReference type="RefSeq" id="WP_012342603.1">
    <property type="nucleotide sequence ID" value="NC_010520.1"/>
</dbReference>
<dbReference type="SMR" id="B1L096"/>
<dbReference type="KEGG" id="cbl:CLK_2447"/>
<dbReference type="HOGENOM" id="CLU_014330_3_2_9"/>
<dbReference type="GO" id="GO:0005737">
    <property type="term" value="C:cytoplasm"/>
    <property type="evidence" value="ECO:0007669"/>
    <property type="project" value="UniProtKB-SubCell"/>
</dbReference>
<dbReference type="GO" id="GO:0004815">
    <property type="term" value="F:aspartate-tRNA ligase activity"/>
    <property type="evidence" value="ECO:0007669"/>
    <property type="project" value="UniProtKB-UniRule"/>
</dbReference>
<dbReference type="GO" id="GO:0005524">
    <property type="term" value="F:ATP binding"/>
    <property type="evidence" value="ECO:0007669"/>
    <property type="project" value="UniProtKB-UniRule"/>
</dbReference>
<dbReference type="GO" id="GO:0140096">
    <property type="term" value="F:catalytic activity, acting on a protein"/>
    <property type="evidence" value="ECO:0007669"/>
    <property type="project" value="UniProtKB-ARBA"/>
</dbReference>
<dbReference type="GO" id="GO:0003676">
    <property type="term" value="F:nucleic acid binding"/>
    <property type="evidence" value="ECO:0007669"/>
    <property type="project" value="InterPro"/>
</dbReference>
<dbReference type="GO" id="GO:0016740">
    <property type="term" value="F:transferase activity"/>
    <property type="evidence" value="ECO:0007669"/>
    <property type="project" value="UniProtKB-ARBA"/>
</dbReference>
<dbReference type="GO" id="GO:0006422">
    <property type="term" value="P:aspartyl-tRNA aminoacylation"/>
    <property type="evidence" value="ECO:0007669"/>
    <property type="project" value="UniProtKB-UniRule"/>
</dbReference>
<dbReference type="CDD" id="cd00777">
    <property type="entry name" value="AspRS_core"/>
    <property type="match status" value="1"/>
</dbReference>
<dbReference type="CDD" id="cd04317">
    <property type="entry name" value="EcAspRS_like_N"/>
    <property type="match status" value="1"/>
</dbReference>
<dbReference type="Gene3D" id="3.30.930.10">
    <property type="entry name" value="Bira Bifunctional Protein, Domain 2"/>
    <property type="match status" value="1"/>
</dbReference>
<dbReference type="Gene3D" id="3.30.1360.30">
    <property type="entry name" value="GAD-like domain"/>
    <property type="match status" value="1"/>
</dbReference>
<dbReference type="Gene3D" id="2.40.50.140">
    <property type="entry name" value="Nucleic acid-binding proteins"/>
    <property type="match status" value="1"/>
</dbReference>
<dbReference type="HAMAP" id="MF_00044">
    <property type="entry name" value="Asp_tRNA_synth_type1"/>
    <property type="match status" value="1"/>
</dbReference>
<dbReference type="InterPro" id="IPR004364">
    <property type="entry name" value="Aa-tRNA-synt_II"/>
</dbReference>
<dbReference type="InterPro" id="IPR006195">
    <property type="entry name" value="aa-tRNA-synth_II"/>
</dbReference>
<dbReference type="InterPro" id="IPR045864">
    <property type="entry name" value="aa-tRNA-synth_II/BPL/LPL"/>
</dbReference>
<dbReference type="InterPro" id="IPR004524">
    <property type="entry name" value="Asp-tRNA-ligase_1"/>
</dbReference>
<dbReference type="InterPro" id="IPR047089">
    <property type="entry name" value="Asp-tRNA-ligase_1_N"/>
</dbReference>
<dbReference type="InterPro" id="IPR002312">
    <property type="entry name" value="Asp/Asn-tRNA-synth_IIb"/>
</dbReference>
<dbReference type="InterPro" id="IPR047090">
    <property type="entry name" value="AspRS_core"/>
</dbReference>
<dbReference type="InterPro" id="IPR004115">
    <property type="entry name" value="GAD-like_sf"/>
</dbReference>
<dbReference type="InterPro" id="IPR029351">
    <property type="entry name" value="GAD_dom"/>
</dbReference>
<dbReference type="InterPro" id="IPR012340">
    <property type="entry name" value="NA-bd_OB-fold"/>
</dbReference>
<dbReference type="InterPro" id="IPR004365">
    <property type="entry name" value="NA-bd_OB_tRNA"/>
</dbReference>
<dbReference type="NCBIfam" id="TIGR00459">
    <property type="entry name" value="aspS_bact"/>
    <property type="match status" value="1"/>
</dbReference>
<dbReference type="NCBIfam" id="NF001750">
    <property type="entry name" value="PRK00476.1"/>
    <property type="match status" value="1"/>
</dbReference>
<dbReference type="PANTHER" id="PTHR22594:SF5">
    <property type="entry name" value="ASPARTATE--TRNA LIGASE, MITOCHONDRIAL"/>
    <property type="match status" value="1"/>
</dbReference>
<dbReference type="PANTHER" id="PTHR22594">
    <property type="entry name" value="ASPARTYL/LYSYL-TRNA SYNTHETASE"/>
    <property type="match status" value="1"/>
</dbReference>
<dbReference type="Pfam" id="PF02938">
    <property type="entry name" value="GAD"/>
    <property type="match status" value="1"/>
</dbReference>
<dbReference type="Pfam" id="PF00152">
    <property type="entry name" value="tRNA-synt_2"/>
    <property type="match status" value="1"/>
</dbReference>
<dbReference type="Pfam" id="PF01336">
    <property type="entry name" value="tRNA_anti-codon"/>
    <property type="match status" value="1"/>
</dbReference>
<dbReference type="PRINTS" id="PR01042">
    <property type="entry name" value="TRNASYNTHASP"/>
</dbReference>
<dbReference type="SUPFAM" id="SSF55681">
    <property type="entry name" value="Class II aaRS and biotin synthetases"/>
    <property type="match status" value="1"/>
</dbReference>
<dbReference type="SUPFAM" id="SSF55261">
    <property type="entry name" value="GAD domain-like"/>
    <property type="match status" value="1"/>
</dbReference>
<dbReference type="SUPFAM" id="SSF50249">
    <property type="entry name" value="Nucleic acid-binding proteins"/>
    <property type="match status" value="1"/>
</dbReference>
<dbReference type="PROSITE" id="PS50862">
    <property type="entry name" value="AA_TRNA_LIGASE_II"/>
    <property type="match status" value="1"/>
</dbReference>
<protein>
    <recommendedName>
        <fullName evidence="1">Aspartate--tRNA ligase</fullName>
        <ecNumber evidence="1">6.1.1.12</ecNumber>
    </recommendedName>
    <alternativeName>
        <fullName evidence="1">Aspartyl-tRNA synthetase</fullName>
        <shortName evidence="1">AspRS</shortName>
    </alternativeName>
</protein>
<organism>
    <name type="scientific">Clostridium botulinum (strain Loch Maree / Type A3)</name>
    <dbReference type="NCBI Taxonomy" id="498214"/>
    <lineage>
        <taxon>Bacteria</taxon>
        <taxon>Bacillati</taxon>
        <taxon>Bacillota</taxon>
        <taxon>Clostridia</taxon>
        <taxon>Eubacteriales</taxon>
        <taxon>Clostridiaceae</taxon>
        <taxon>Clostridium</taxon>
    </lineage>
</organism>
<keyword id="KW-0030">Aminoacyl-tRNA synthetase</keyword>
<keyword id="KW-0067">ATP-binding</keyword>
<keyword id="KW-0963">Cytoplasm</keyword>
<keyword id="KW-0436">Ligase</keyword>
<keyword id="KW-0547">Nucleotide-binding</keyword>
<keyword id="KW-0648">Protein biosynthesis</keyword>
<reference key="1">
    <citation type="journal article" date="2007" name="PLoS ONE">
        <title>Analysis of the neurotoxin complex genes in Clostridium botulinum A1-A4 and B1 strains: BoNT/A3, /Ba4 and /B1 clusters are located within plasmids.</title>
        <authorList>
            <person name="Smith T.J."/>
            <person name="Hill K.K."/>
            <person name="Foley B.T."/>
            <person name="Detter J.C."/>
            <person name="Munk A.C."/>
            <person name="Bruce D.C."/>
            <person name="Doggett N.A."/>
            <person name="Smith L.A."/>
            <person name="Marks J.D."/>
            <person name="Xie G."/>
            <person name="Brettin T.S."/>
        </authorList>
    </citation>
    <scope>NUCLEOTIDE SEQUENCE [LARGE SCALE GENOMIC DNA]</scope>
    <source>
        <strain>Loch Maree / Type A3</strain>
    </source>
</reference>
<accession>B1L096</accession>
<proteinExistence type="inferred from homology"/>
<evidence type="ECO:0000255" key="1">
    <source>
        <dbReference type="HAMAP-Rule" id="MF_00044"/>
    </source>
</evidence>
<feature type="chain" id="PRO_1000090983" description="Aspartate--tRNA ligase">
    <location>
        <begin position="1"/>
        <end position="593"/>
    </location>
</feature>
<feature type="region of interest" description="Aspartate" evidence="1">
    <location>
        <begin position="204"/>
        <end position="207"/>
    </location>
</feature>
<feature type="binding site" evidence="1">
    <location>
        <position position="180"/>
    </location>
    <ligand>
        <name>L-aspartate</name>
        <dbReference type="ChEBI" id="CHEBI:29991"/>
    </ligand>
</feature>
<feature type="binding site" evidence="1">
    <location>
        <begin position="226"/>
        <end position="228"/>
    </location>
    <ligand>
        <name>ATP</name>
        <dbReference type="ChEBI" id="CHEBI:30616"/>
    </ligand>
</feature>
<feature type="binding site" evidence="1">
    <location>
        <position position="226"/>
    </location>
    <ligand>
        <name>L-aspartate</name>
        <dbReference type="ChEBI" id="CHEBI:29991"/>
    </ligand>
</feature>
<feature type="binding site" evidence="1">
    <location>
        <position position="235"/>
    </location>
    <ligand>
        <name>ATP</name>
        <dbReference type="ChEBI" id="CHEBI:30616"/>
    </ligand>
</feature>
<feature type="binding site" evidence="1">
    <location>
        <position position="453"/>
    </location>
    <ligand>
        <name>L-aspartate</name>
        <dbReference type="ChEBI" id="CHEBI:29991"/>
    </ligand>
</feature>
<feature type="binding site" evidence="1">
    <location>
        <position position="487"/>
    </location>
    <ligand>
        <name>ATP</name>
        <dbReference type="ChEBI" id="CHEBI:30616"/>
    </ligand>
</feature>
<feature type="binding site" evidence="1">
    <location>
        <position position="494"/>
    </location>
    <ligand>
        <name>L-aspartate</name>
        <dbReference type="ChEBI" id="CHEBI:29991"/>
    </ligand>
</feature>
<feature type="binding site" evidence="1">
    <location>
        <begin position="539"/>
        <end position="542"/>
    </location>
    <ligand>
        <name>ATP</name>
        <dbReference type="ChEBI" id="CHEBI:30616"/>
    </ligand>
</feature>
<sequence>MGEALRGLKRTIMCGEPRENNIGQKVTVMGWVQRKRNLGGLIFVDLRDRTGIMQIVFGEEINKEAFEKSDNVKSEYCIAVTGEIVKRQSPNNDMETGAVELKGEDIKILSESETPPIYIKEGLDASENIRLKYRYLDLRRPDMQKIFMIRHKTCKVVRDFLDENGFLEMETPILTKSTPEGARDYLVPSRNYKGMFYALPQSPQIFKQLLMVSGYDKYFQITKCFRDEDLRANRQPEFTQIDMELSFIEEDDVIELNERLLAKVFKEVAGIDVKLPIERMPYKIAMEKYGSDKPDLRFGMEINDLTEAVKNSEFKVFKGAIEAGGSVRAIKAGNCATMGRKQIDKLQDFVKTYKAKGLAWIAYKEDEIKSPIAKFLTEEEMKAILEKMDAKVGDLILIVADKNNVVFESLGALRLHLAKELDIINKDEFRFVWITEFPLLSYNEEEGRYQAEHHPFTALMDEDVELLDTDPGKVRAKAYDIVLNGEELGGGSIRIHDSKLQEKMFNVLGFTKEKAWERFGFLLEAFKFGPPPHGGLAYGLDRMIMFLAGTENIKDVITFPKNQNAFCPLTEAPNVVDENQLEELGIKKIEKED</sequence>
<gene>
    <name evidence="1" type="primary">aspS</name>
    <name type="ordered locus">CLK_2447</name>
</gene>
<name>SYD_CLOBM</name>
<comment type="function">
    <text evidence="1">Catalyzes the attachment of L-aspartate to tRNA(Asp) in a two-step reaction: L-aspartate is first activated by ATP to form Asp-AMP and then transferred to the acceptor end of tRNA(Asp).</text>
</comment>
<comment type="catalytic activity">
    <reaction evidence="1">
        <text>tRNA(Asp) + L-aspartate + ATP = L-aspartyl-tRNA(Asp) + AMP + diphosphate</text>
        <dbReference type="Rhea" id="RHEA:19649"/>
        <dbReference type="Rhea" id="RHEA-COMP:9660"/>
        <dbReference type="Rhea" id="RHEA-COMP:9678"/>
        <dbReference type="ChEBI" id="CHEBI:29991"/>
        <dbReference type="ChEBI" id="CHEBI:30616"/>
        <dbReference type="ChEBI" id="CHEBI:33019"/>
        <dbReference type="ChEBI" id="CHEBI:78442"/>
        <dbReference type="ChEBI" id="CHEBI:78516"/>
        <dbReference type="ChEBI" id="CHEBI:456215"/>
        <dbReference type="EC" id="6.1.1.12"/>
    </reaction>
</comment>
<comment type="subunit">
    <text evidence="1">Homodimer.</text>
</comment>
<comment type="subcellular location">
    <subcellularLocation>
        <location evidence="1">Cytoplasm</location>
    </subcellularLocation>
</comment>
<comment type="similarity">
    <text evidence="1">Belongs to the class-II aminoacyl-tRNA synthetase family. Type 1 subfamily.</text>
</comment>